<evidence type="ECO:0000255" key="1">
    <source>
        <dbReference type="HAMAP-Rule" id="MF_00503"/>
    </source>
</evidence>
<evidence type="ECO:0000305" key="2"/>
<dbReference type="EMBL" id="CP001298">
    <property type="protein sequence ID" value="ACK85083.1"/>
    <property type="molecule type" value="Genomic_DNA"/>
</dbReference>
<dbReference type="RefSeq" id="WP_004446280.1">
    <property type="nucleotide sequence ID" value="NC_011757.1"/>
</dbReference>
<dbReference type="SMR" id="B7L2N9"/>
<dbReference type="GeneID" id="72991655"/>
<dbReference type="KEGG" id="mch:Mchl_4307"/>
<dbReference type="HOGENOM" id="CLU_078938_1_0_5"/>
<dbReference type="Proteomes" id="UP000002385">
    <property type="component" value="Chromosome"/>
</dbReference>
<dbReference type="GO" id="GO:1990904">
    <property type="term" value="C:ribonucleoprotein complex"/>
    <property type="evidence" value="ECO:0007669"/>
    <property type="project" value="UniProtKB-KW"/>
</dbReference>
<dbReference type="GO" id="GO:0005840">
    <property type="term" value="C:ribosome"/>
    <property type="evidence" value="ECO:0007669"/>
    <property type="project" value="UniProtKB-KW"/>
</dbReference>
<dbReference type="GO" id="GO:0019843">
    <property type="term" value="F:rRNA binding"/>
    <property type="evidence" value="ECO:0007669"/>
    <property type="project" value="UniProtKB-UniRule"/>
</dbReference>
<dbReference type="GO" id="GO:0003735">
    <property type="term" value="F:structural constituent of ribosome"/>
    <property type="evidence" value="ECO:0007669"/>
    <property type="project" value="InterPro"/>
</dbReference>
<dbReference type="GO" id="GO:0006412">
    <property type="term" value="P:translation"/>
    <property type="evidence" value="ECO:0007669"/>
    <property type="project" value="UniProtKB-UniRule"/>
</dbReference>
<dbReference type="Gene3D" id="3.10.430.100">
    <property type="entry name" value="Ribosomal protein L9, C-terminal domain"/>
    <property type="match status" value="1"/>
</dbReference>
<dbReference type="Gene3D" id="3.40.5.10">
    <property type="entry name" value="Ribosomal protein L9, N-terminal domain"/>
    <property type="match status" value="1"/>
</dbReference>
<dbReference type="HAMAP" id="MF_00503">
    <property type="entry name" value="Ribosomal_bL9"/>
    <property type="match status" value="1"/>
</dbReference>
<dbReference type="InterPro" id="IPR000244">
    <property type="entry name" value="Ribosomal_bL9"/>
</dbReference>
<dbReference type="InterPro" id="IPR009027">
    <property type="entry name" value="Ribosomal_bL9/RNase_H1_N"/>
</dbReference>
<dbReference type="InterPro" id="IPR020594">
    <property type="entry name" value="Ribosomal_bL9_bac/chp"/>
</dbReference>
<dbReference type="InterPro" id="IPR020069">
    <property type="entry name" value="Ribosomal_bL9_C"/>
</dbReference>
<dbReference type="InterPro" id="IPR036791">
    <property type="entry name" value="Ribosomal_bL9_C_sf"/>
</dbReference>
<dbReference type="InterPro" id="IPR020070">
    <property type="entry name" value="Ribosomal_bL9_N"/>
</dbReference>
<dbReference type="InterPro" id="IPR036935">
    <property type="entry name" value="Ribosomal_bL9_N_sf"/>
</dbReference>
<dbReference type="NCBIfam" id="TIGR00158">
    <property type="entry name" value="L9"/>
    <property type="match status" value="1"/>
</dbReference>
<dbReference type="PANTHER" id="PTHR21368">
    <property type="entry name" value="50S RIBOSOMAL PROTEIN L9"/>
    <property type="match status" value="1"/>
</dbReference>
<dbReference type="Pfam" id="PF03948">
    <property type="entry name" value="Ribosomal_L9_C"/>
    <property type="match status" value="1"/>
</dbReference>
<dbReference type="Pfam" id="PF01281">
    <property type="entry name" value="Ribosomal_L9_N"/>
    <property type="match status" value="1"/>
</dbReference>
<dbReference type="SUPFAM" id="SSF55658">
    <property type="entry name" value="L9 N-domain-like"/>
    <property type="match status" value="1"/>
</dbReference>
<dbReference type="SUPFAM" id="SSF55653">
    <property type="entry name" value="Ribosomal protein L9 C-domain"/>
    <property type="match status" value="1"/>
</dbReference>
<dbReference type="PROSITE" id="PS00651">
    <property type="entry name" value="RIBOSOMAL_L9"/>
    <property type="match status" value="1"/>
</dbReference>
<gene>
    <name evidence="1" type="primary">rplI</name>
    <name type="ordered locus">Mchl_4307</name>
</gene>
<accession>B7L2N9</accession>
<comment type="function">
    <text evidence="1">Binds to the 23S rRNA.</text>
</comment>
<comment type="similarity">
    <text evidence="1">Belongs to the bacterial ribosomal protein bL9 family.</text>
</comment>
<keyword id="KW-0687">Ribonucleoprotein</keyword>
<keyword id="KW-0689">Ribosomal protein</keyword>
<keyword id="KW-0694">RNA-binding</keyword>
<keyword id="KW-0699">rRNA-binding</keyword>
<name>RL9_METC4</name>
<reference key="1">
    <citation type="submission" date="2008-12" db="EMBL/GenBank/DDBJ databases">
        <title>Complete sequence of chromosome of Methylobacterium chloromethanicum CM4.</title>
        <authorList>
            <consortium name="US DOE Joint Genome Institute"/>
            <person name="Lucas S."/>
            <person name="Copeland A."/>
            <person name="Lapidus A."/>
            <person name="Glavina del Rio T."/>
            <person name="Dalin E."/>
            <person name="Tice H."/>
            <person name="Bruce D."/>
            <person name="Goodwin L."/>
            <person name="Pitluck S."/>
            <person name="Chertkov O."/>
            <person name="Brettin T."/>
            <person name="Detter J.C."/>
            <person name="Han C."/>
            <person name="Larimer F."/>
            <person name="Land M."/>
            <person name="Hauser L."/>
            <person name="Kyrpides N."/>
            <person name="Mikhailova N."/>
            <person name="Marx C."/>
            <person name="Richardson P."/>
        </authorList>
    </citation>
    <scope>NUCLEOTIDE SEQUENCE [LARGE SCALE GENOMIC DNA]</scope>
    <source>
        <strain>CM4 / NCIMB 13688</strain>
    </source>
</reference>
<feature type="chain" id="PRO_1000196252" description="Large ribosomal subunit protein bL9">
    <location>
        <begin position="1"/>
        <end position="190"/>
    </location>
</feature>
<protein>
    <recommendedName>
        <fullName evidence="1">Large ribosomal subunit protein bL9</fullName>
    </recommendedName>
    <alternativeName>
        <fullName evidence="2">50S ribosomal protein L9</fullName>
    </alternativeName>
</protein>
<proteinExistence type="inferred from homology"/>
<organism>
    <name type="scientific">Methylorubrum extorquens (strain CM4 / NCIMB 13688)</name>
    <name type="common">Methylobacterium extorquens</name>
    <dbReference type="NCBI Taxonomy" id="440085"/>
    <lineage>
        <taxon>Bacteria</taxon>
        <taxon>Pseudomonadati</taxon>
        <taxon>Pseudomonadota</taxon>
        <taxon>Alphaproteobacteria</taxon>
        <taxon>Hyphomicrobiales</taxon>
        <taxon>Methylobacteriaceae</taxon>
        <taxon>Methylorubrum</taxon>
    </lineage>
</organism>
<sequence length="190" mass="20949">MEVILLERVAKLGQMGETVNVRPGYARNFLLARGKALRATENNKKHFEAQRAQLEARNLERRNEAQTVAEKLDGQSFVLIRQSGETGVLYGSVSTRDLAEVVTKEGFSVERGQFVLNQPIKTLGLHTVPVTLHPEVEVKVTVNIARSPEEAERQARGESVTEREQFNLDDLGLEVGQALADAGEGADDRG</sequence>